<dbReference type="EMBL" id="AF098923">
    <property type="protein sequence ID" value="AAD39353.1"/>
    <property type="molecule type" value="mRNA"/>
</dbReference>
<dbReference type="EMBL" id="AY081760">
    <property type="protein sequence ID" value="AAL87466.1"/>
    <property type="molecule type" value="Genomic_DNA"/>
</dbReference>
<dbReference type="SMR" id="Q802B3"/>
<dbReference type="GO" id="GO:0005576">
    <property type="term" value="C:extracellular region"/>
    <property type="evidence" value="ECO:0007669"/>
    <property type="project" value="UniProtKB-SubCell"/>
</dbReference>
<dbReference type="GO" id="GO:0030550">
    <property type="term" value="F:acetylcholine receptor inhibitor activity"/>
    <property type="evidence" value="ECO:0007669"/>
    <property type="project" value="UniProtKB-KW"/>
</dbReference>
<dbReference type="GO" id="GO:0099106">
    <property type="term" value="F:ion channel regulator activity"/>
    <property type="evidence" value="ECO:0007669"/>
    <property type="project" value="UniProtKB-KW"/>
</dbReference>
<dbReference type="GO" id="GO:0090729">
    <property type="term" value="F:toxin activity"/>
    <property type="evidence" value="ECO:0007669"/>
    <property type="project" value="UniProtKB-KW"/>
</dbReference>
<dbReference type="CDD" id="cd00206">
    <property type="entry name" value="TFP_snake_toxin"/>
    <property type="match status" value="1"/>
</dbReference>
<dbReference type="FunFam" id="2.10.60.10:FF:000024">
    <property type="entry name" value="Cytotoxin 1"/>
    <property type="match status" value="1"/>
</dbReference>
<dbReference type="Gene3D" id="2.10.60.10">
    <property type="entry name" value="CD59"/>
    <property type="match status" value="1"/>
</dbReference>
<dbReference type="InterPro" id="IPR003571">
    <property type="entry name" value="Snake_3FTx"/>
</dbReference>
<dbReference type="InterPro" id="IPR045860">
    <property type="entry name" value="Snake_toxin-like_sf"/>
</dbReference>
<dbReference type="InterPro" id="IPR018354">
    <property type="entry name" value="Snake_toxin_con_site"/>
</dbReference>
<dbReference type="InterPro" id="IPR054131">
    <property type="entry name" value="Toxin_cobra-type"/>
</dbReference>
<dbReference type="Pfam" id="PF21947">
    <property type="entry name" value="Toxin_cobra-type"/>
    <property type="match status" value="1"/>
</dbReference>
<dbReference type="SUPFAM" id="SSF57302">
    <property type="entry name" value="Snake toxin-like"/>
    <property type="match status" value="1"/>
</dbReference>
<dbReference type="PROSITE" id="PS00272">
    <property type="entry name" value="SNAKE_TOXIN"/>
    <property type="match status" value="1"/>
</dbReference>
<name>3NO28_NAJSP</name>
<reference key="1">
    <citation type="journal article" date="2002" name="Eur. J. Biochem.">
        <title>A synthetic weak neurotoxin binds with low affinity to Torpedo and chicken alpha7 nicotinic acetylcholine receptors.</title>
        <authorList>
            <person name="Poh S.L."/>
            <person name="Mourier G."/>
            <person name="Thai R."/>
            <person name="Armugam A."/>
            <person name="Molgo J."/>
            <person name="Servent D."/>
            <person name="Jeyaseelan K."/>
            <person name="Menez A."/>
        </authorList>
    </citation>
    <scope>NUCLEOTIDE SEQUENCE [MRNA]</scope>
    <source>
        <tissue>Venom gland</tissue>
    </source>
</reference>
<reference key="2">
    <citation type="journal article" date="2003" name="FEBS Lett.">
        <title>Structurally conserved alpha-neurotoxin genes encode functionally diverse proteins in the venom of Naja sputatrix.</title>
        <authorList>
            <person name="Jeyaseelan K."/>
            <person name="Poh S.L."/>
            <person name="Nair R."/>
            <person name="Armugam A."/>
        </authorList>
    </citation>
    <scope>NUCLEOTIDE SEQUENCE [MRNA]</scope>
    <source>
        <tissue>Venom gland</tissue>
    </source>
</reference>
<feature type="signal peptide" evidence="1">
    <location>
        <begin position="1"/>
        <end position="21"/>
    </location>
</feature>
<feature type="chain" id="PRO_0000035477" description="Weak neurotoxin 8">
    <location>
        <begin position="22"/>
        <end position="86"/>
    </location>
</feature>
<feature type="disulfide bond" evidence="3">
    <location>
        <begin position="24"/>
        <end position="45"/>
    </location>
</feature>
<feature type="disulfide bond" evidence="3">
    <location>
        <begin position="27"/>
        <end position="32"/>
    </location>
</feature>
<feature type="disulfide bond" evidence="3">
    <location>
        <begin position="38"/>
        <end position="63"/>
    </location>
</feature>
<feature type="disulfide bond" evidence="3">
    <location>
        <begin position="67"/>
        <end position="78"/>
    </location>
</feature>
<feature type="disulfide bond" evidence="3">
    <location>
        <begin position="79"/>
        <end position="84"/>
    </location>
</feature>
<feature type="sequence variant">
    <original>V</original>
    <variation>L</variation>
    <location>
        <position position="9"/>
    </location>
</feature>
<accession>Q802B3</accession>
<accession>Q9W7I4</accession>
<protein>
    <recommendedName>
        <fullName>Weak neurotoxin 8</fullName>
        <shortName>Wntx-8</shortName>
    </recommendedName>
</protein>
<organism>
    <name type="scientific">Naja sputatrix</name>
    <name type="common">Malayan spitting cobra</name>
    <name type="synonym">Naja naja sputatrix</name>
    <dbReference type="NCBI Taxonomy" id="33626"/>
    <lineage>
        <taxon>Eukaryota</taxon>
        <taxon>Metazoa</taxon>
        <taxon>Chordata</taxon>
        <taxon>Craniata</taxon>
        <taxon>Vertebrata</taxon>
        <taxon>Euteleostomi</taxon>
        <taxon>Lepidosauria</taxon>
        <taxon>Squamata</taxon>
        <taxon>Bifurcata</taxon>
        <taxon>Unidentata</taxon>
        <taxon>Episquamata</taxon>
        <taxon>Toxicofera</taxon>
        <taxon>Serpentes</taxon>
        <taxon>Colubroidea</taxon>
        <taxon>Elapidae</taxon>
        <taxon>Elapinae</taxon>
        <taxon>Naja</taxon>
    </lineage>
</organism>
<keyword id="KW-0008">Acetylcholine receptor inhibiting toxin</keyword>
<keyword id="KW-1015">Disulfide bond</keyword>
<keyword id="KW-0872">Ion channel impairing toxin</keyword>
<keyword id="KW-0528">Neurotoxin</keyword>
<keyword id="KW-0629">Postsynaptic neurotoxin</keyword>
<keyword id="KW-0964">Secreted</keyword>
<keyword id="KW-0732">Signal</keyword>
<keyword id="KW-0800">Toxin</keyword>
<evidence type="ECO:0000250" key="1"/>
<evidence type="ECO:0000250" key="2">
    <source>
        <dbReference type="UniProtKB" id="O42255"/>
    </source>
</evidence>
<evidence type="ECO:0000250" key="3">
    <source>
        <dbReference type="UniProtKB" id="Q8AY51"/>
    </source>
</evidence>
<evidence type="ECO:0000305" key="4"/>
<proteinExistence type="inferred from homology"/>
<sequence length="86" mass="9809">MKTLLLTLVVVTIVCLDLGYTLTCLNCPEMFCGKFQTCRNGEKICFKMLQQRRPFSLRYIRGCAATCPGTKPRDMVECCSTDRCNR</sequence>
<comment type="function">
    <text evidence="2">Binds with low affinity to muscular (alpha-1-beta-1-delta-epsilon/CHRNA1-CHRNB1-CHRND-CHRNE) and very low affinity to neuronal (alpha-7/CHRNA7) nicotinic acetylcholine receptor (nAChR).</text>
</comment>
<comment type="subcellular location">
    <subcellularLocation>
        <location evidence="2">Secreted</location>
    </subcellularLocation>
</comment>
<comment type="tissue specificity">
    <text evidence="4">Expressed by the venom gland.</text>
</comment>
<comment type="similarity">
    <text evidence="4">Belongs to the three-finger toxin family. Ancestral subfamily. Orphan group II sub-subfamily.</text>
</comment>